<accession>M1L9M3</accession>
<gene>
    <name type="primary">OPG087</name>
    <name type="ORF">MPXVgp072</name>
</gene>
<protein>
    <recommendedName>
        <fullName>Late transcription elongation factor OPG087</fullName>
    </recommendedName>
</protein>
<name>PG087_MONPV</name>
<keyword id="KW-0244">Early protein</keyword>
<keyword id="KW-0251">Elongation factor</keyword>
<keyword id="KW-0648">Protein biosynthesis</keyword>
<keyword id="KW-1185">Reference proteome</keyword>
<dbReference type="EMBL" id="KC257461">
    <property type="protein sequence ID" value="AGF36976.1"/>
    <property type="molecule type" value="Genomic_DNA"/>
</dbReference>
<dbReference type="EMBL" id="MT903340">
    <property type="protein sequence ID" value="QNP12942.1"/>
    <property type="molecule type" value="Genomic_DNA"/>
</dbReference>
<dbReference type="RefSeq" id="NP_536499.1">
    <property type="nucleotide sequence ID" value="NC_003310.1"/>
</dbReference>
<dbReference type="RefSeq" id="YP_010377069.1">
    <property type="nucleotide sequence ID" value="NC_063383.1"/>
</dbReference>
<dbReference type="GeneID" id="72551482"/>
<dbReference type="GeneID" id="929067"/>
<dbReference type="KEGG" id="vg:929067"/>
<dbReference type="Proteomes" id="UP000516359">
    <property type="component" value="Genome"/>
</dbReference>
<dbReference type="InterPro" id="IPR008446">
    <property type="entry name" value="Chordopox_G2"/>
</dbReference>
<dbReference type="Pfam" id="PF05796">
    <property type="entry name" value="Chordopox_G2"/>
    <property type="match status" value="1"/>
</dbReference>
<evidence type="ECO:0000250" key="1">
    <source>
        <dbReference type="UniProtKB" id="P68456"/>
    </source>
</evidence>
<evidence type="ECO:0000305" key="2"/>
<comment type="function">
    <text evidence="1">Involved in postreplicative transcription elongation on intermediate and late genes.</text>
</comment>
<comment type="subunit">
    <text evidence="1">Interacts with H5 and A18. Might be part of a transcription complex composed at least of OPG087, OPG145, and OPG110.</text>
</comment>
<comment type="similarity">
    <text evidence="2">Belongs to the orthopoxvirus OPG087 family.</text>
</comment>
<feature type="chain" id="PRO_0000457686" description="Late transcription elongation factor OPG087">
    <location>
        <begin position="1"/>
        <end position="220"/>
    </location>
</feature>
<organismHost>
    <name type="scientific">Cynomys gunnisoni</name>
    <name type="common">Gunnison's prairie dog</name>
    <name type="synonym">Spermophilus gunnisoni</name>
    <dbReference type="NCBI Taxonomy" id="45479"/>
</organismHost>
<organismHost>
    <name type="scientific">Cynomys leucurus</name>
    <name type="common">White-tailed prairie dog</name>
    <dbReference type="NCBI Taxonomy" id="99825"/>
</organismHost>
<organismHost>
    <name type="scientific">Cynomys ludovicianus</name>
    <name type="common">Black-tailed prairie dog</name>
    <dbReference type="NCBI Taxonomy" id="45480"/>
</organismHost>
<organismHost>
    <name type="scientific">Cynomys mexicanus</name>
    <name type="common">Mexican prairie dog</name>
    <dbReference type="NCBI Taxonomy" id="99826"/>
</organismHost>
<organismHost>
    <name type="scientific">Cynomys parvidens</name>
    <name type="common">Utah prairie dog</name>
    <dbReference type="NCBI Taxonomy" id="99827"/>
</organismHost>
<organismHost>
    <name type="scientific">Gliridae</name>
    <name type="common">dormice</name>
    <dbReference type="NCBI Taxonomy" id="30650"/>
</organismHost>
<organismHost>
    <name type="scientific">Heliosciurus ruwenzorii</name>
    <name type="common">Ruwenzori sun squirrel</name>
    <dbReference type="NCBI Taxonomy" id="226685"/>
</organismHost>
<organismHost>
    <name type="scientific">Homo sapiens</name>
    <name type="common">Human</name>
    <dbReference type="NCBI Taxonomy" id="9606"/>
</organismHost>
<organismHost>
    <name type="scientific">Mus musculus</name>
    <name type="common">Mouse</name>
    <dbReference type="NCBI Taxonomy" id="10090"/>
</organismHost>
<proteinExistence type="inferred from homology"/>
<reference key="1">
    <citation type="journal article" date="2013" name="Am. J. Trop. Med. Hyg.">
        <title>Detection of human monkeypox in the republic of the congo following intensive community education.</title>
        <authorList>
            <person name="Reynolds M.G."/>
            <person name="Emerson G.L."/>
            <person name="Pukuta E."/>
            <person name="Karhemere S."/>
            <person name="Muyembe J.J."/>
            <person name="Bikindou A."/>
            <person name="McCollum A.M."/>
            <person name="Moses C."/>
            <person name="Wilkins K."/>
            <person name="Zhao H."/>
            <person name="Damon I.K."/>
            <person name="Karem K.L."/>
            <person name="Li Y."/>
            <person name="Carroll D.S."/>
            <person name="Mombouli J.V."/>
        </authorList>
    </citation>
    <scope>NUCLEOTIDE SEQUENCE</scope>
    <source>
        <strain>ROC2010</strain>
    </source>
</reference>
<reference key="2">
    <citation type="journal article" date="2022" name="J. Infect. Dis.">
        <title>Exportation of Monkeypox virus from the African continent.</title>
        <authorList>
            <person name="Mauldin M.R."/>
            <person name="McCollum A.M."/>
            <person name="Nakazawa Y.J."/>
            <person name="Mandra A."/>
            <person name="Whitehouse E.R."/>
            <person name="Davidson W."/>
            <person name="Zhao H."/>
            <person name="Gao J."/>
            <person name="Li Y."/>
            <person name="Doty J."/>
            <person name="Yinka-Ogunleye A."/>
            <person name="Akinpelu A."/>
            <person name="Aruna O."/>
            <person name="Naidoo D."/>
            <person name="Lewandowski K."/>
            <person name="Afrough B."/>
            <person name="Graham V."/>
            <person name="Aarons E."/>
            <person name="Hewson R."/>
            <person name="Vipond R."/>
            <person name="Dunning J."/>
            <person name="Chand M."/>
            <person name="Brown C."/>
            <person name="Cohen-Gihon I."/>
            <person name="Erez N."/>
            <person name="Shifman O."/>
            <person name="Israeli O."/>
            <person name="Sharon M."/>
            <person name="Schwartz E."/>
            <person name="Beth-Din A."/>
            <person name="Zvi A."/>
            <person name="Mak T.M."/>
            <person name="Ng Y.K."/>
            <person name="Cui L."/>
            <person name="Lin R.T.P."/>
            <person name="Olson V.A."/>
            <person name="Brooks T."/>
            <person name="Paran N."/>
            <person name="Ihekweazu C."/>
            <person name="Reynolds M.G."/>
        </authorList>
    </citation>
    <scope>NUCLEOTIDE SEQUENCE [LARGE SCALE GENOMIC DNA]</scope>
    <source>
        <strain>MPXV-M5312_HM12_Rivers</strain>
    </source>
</reference>
<sequence length="220" mass="25760">MPFRDLILFNLSKFLLTEDEESLEIVSSLCRGFEISYDDLISYFPDRKYHKYISKVFEHVDLSEELSMEFHDTTLRDLVYLRLYKYSKYIRPCYKLGDNLKGIVVIKDRNIYIREANDDLIEYLLKEYTPQIYTYSNERVPIAGSKLILCGFSQVTFMAYTTSHITTNKKVDVLVSKKCIDELVDPINYQILQNLFDKGSGTINKILRKIFYSVTGGQTP</sequence>
<organism>
    <name type="scientific">Monkeypox virus</name>
    <dbReference type="NCBI Taxonomy" id="10244"/>
    <lineage>
        <taxon>Viruses</taxon>
        <taxon>Varidnaviria</taxon>
        <taxon>Bamfordvirae</taxon>
        <taxon>Nucleocytoviricota</taxon>
        <taxon>Pokkesviricetes</taxon>
        <taxon>Chitovirales</taxon>
        <taxon>Poxviridae</taxon>
        <taxon>Chordopoxvirinae</taxon>
        <taxon>Orthopoxvirus</taxon>
    </lineage>
</organism>